<protein>
    <recommendedName>
        <fullName evidence="1">Threonine--tRNA ligase</fullName>
        <ecNumber evidence="1">6.1.1.3</ecNumber>
    </recommendedName>
    <alternativeName>
        <fullName evidence="1">Threonyl-tRNA synthetase</fullName>
        <shortName evidence="1">ThrRS</shortName>
    </alternativeName>
</protein>
<organism>
    <name type="scientific">Neisseria meningitidis serogroup C (strain 053442)</name>
    <dbReference type="NCBI Taxonomy" id="374833"/>
    <lineage>
        <taxon>Bacteria</taxon>
        <taxon>Pseudomonadati</taxon>
        <taxon>Pseudomonadota</taxon>
        <taxon>Betaproteobacteria</taxon>
        <taxon>Neisseriales</taxon>
        <taxon>Neisseriaceae</taxon>
        <taxon>Neisseria</taxon>
    </lineage>
</organism>
<accession>A9M375</accession>
<name>SYT_NEIM0</name>
<dbReference type="EC" id="6.1.1.3" evidence="1"/>
<dbReference type="EMBL" id="CP000381">
    <property type="protein sequence ID" value="ABX72875.1"/>
    <property type="molecule type" value="Genomic_DNA"/>
</dbReference>
<dbReference type="RefSeq" id="WP_012221438.1">
    <property type="nucleotide sequence ID" value="NC_010120.1"/>
</dbReference>
<dbReference type="SMR" id="A9M375"/>
<dbReference type="KEGG" id="nmn:NMCC_0680"/>
<dbReference type="HOGENOM" id="CLU_008554_0_1_4"/>
<dbReference type="Proteomes" id="UP000001177">
    <property type="component" value="Chromosome"/>
</dbReference>
<dbReference type="GO" id="GO:0005829">
    <property type="term" value="C:cytosol"/>
    <property type="evidence" value="ECO:0007669"/>
    <property type="project" value="TreeGrafter"/>
</dbReference>
<dbReference type="GO" id="GO:0005524">
    <property type="term" value="F:ATP binding"/>
    <property type="evidence" value="ECO:0007669"/>
    <property type="project" value="UniProtKB-UniRule"/>
</dbReference>
<dbReference type="GO" id="GO:0046872">
    <property type="term" value="F:metal ion binding"/>
    <property type="evidence" value="ECO:0007669"/>
    <property type="project" value="UniProtKB-KW"/>
</dbReference>
<dbReference type="GO" id="GO:0004829">
    <property type="term" value="F:threonine-tRNA ligase activity"/>
    <property type="evidence" value="ECO:0007669"/>
    <property type="project" value="UniProtKB-UniRule"/>
</dbReference>
<dbReference type="GO" id="GO:0000049">
    <property type="term" value="F:tRNA binding"/>
    <property type="evidence" value="ECO:0007669"/>
    <property type="project" value="UniProtKB-KW"/>
</dbReference>
<dbReference type="GO" id="GO:0006435">
    <property type="term" value="P:threonyl-tRNA aminoacylation"/>
    <property type="evidence" value="ECO:0007669"/>
    <property type="project" value="UniProtKB-UniRule"/>
</dbReference>
<dbReference type="CDD" id="cd01667">
    <property type="entry name" value="TGS_ThrRS"/>
    <property type="match status" value="1"/>
</dbReference>
<dbReference type="CDD" id="cd00860">
    <property type="entry name" value="ThrRS_anticodon"/>
    <property type="match status" value="1"/>
</dbReference>
<dbReference type="CDD" id="cd00771">
    <property type="entry name" value="ThrRS_core"/>
    <property type="match status" value="1"/>
</dbReference>
<dbReference type="FunFam" id="3.10.20.30:FF:000005">
    <property type="entry name" value="Threonine--tRNA ligase"/>
    <property type="match status" value="1"/>
</dbReference>
<dbReference type="FunFam" id="3.30.54.20:FF:000002">
    <property type="entry name" value="Threonine--tRNA ligase"/>
    <property type="match status" value="1"/>
</dbReference>
<dbReference type="FunFam" id="3.30.930.10:FF:000002">
    <property type="entry name" value="Threonine--tRNA ligase"/>
    <property type="match status" value="1"/>
</dbReference>
<dbReference type="FunFam" id="3.40.50.800:FF:000001">
    <property type="entry name" value="Threonine--tRNA ligase"/>
    <property type="match status" value="1"/>
</dbReference>
<dbReference type="FunFam" id="3.30.980.10:FF:000005">
    <property type="entry name" value="Threonyl-tRNA synthetase, mitochondrial"/>
    <property type="match status" value="1"/>
</dbReference>
<dbReference type="Gene3D" id="3.10.20.30">
    <property type="match status" value="1"/>
</dbReference>
<dbReference type="Gene3D" id="3.30.54.20">
    <property type="match status" value="1"/>
</dbReference>
<dbReference type="Gene3D" id="3.40.50.800">
    <property type="entry name" value="Anticodon-binding domain"/>
    <property type="match status" value="1"/>
</dbReference>
<dbReference type="Gene3D" id="3.30.930.10">
    <property type="entry name" value="Bira Bifunctional Protein, Domain 2"/>
    <property type="match status" value="1"/>
</dbReference>
<dbReference type="Gene3D" id="3.30.980.10">
    <property type="entry name" value="Threonyl-trna Synthetase, Chain A, domain 2"/>
    <property type="match status" value="1"/>
</dbReference>
<dbReference type="HAMAP" id="MF_00184">
    <property type="entry name" value="Thr_tRNA_synth"/>
    <property type="match status" value="1"/>
</dbReference>
<dbReference type="InterPro" id="IPR002314">
    <property type="entry name" value="aa-tRNA-synt_IIb"/>
</dbReference>
<dbReference type="InterPro" id="IPR006195">
    <property type="entry name" value="aa-tRNA-synth_II"/>
</dbReference>
<dbReference type="InterPro" id="IPR045864">
    <property type="entry name" value="aa-tRNA-synth_II/BPL/LPL"/>
</dbReference>
<dbReference type="InterPro" id="IPR004154">
    <property type="entry name" value="Anticodon-bd"/>
</dbReference>
<dbReference type="InterPro" id="IPR036621">
    <property type="entry name" value="Anticodon-bd_dom_sf"/>
</dbReference>
<dbReference type="InterPro" id="IPR012675">
    <property type="entry name" value="Beta-grasp_dom_sf"/>
</dbReference>
<dbReference type="InterPro" id="IPR004095">
    <property type="entry name" value="TGS"/>
</dbReference>
<dbReference type="InterPro" id="IPR012676">
    <property type="entry name" value="TGS-like"/>
</dbReference>
<dbReference type="InterPro" id="IPR002320">
    <property type="entry name" value="Thr-tRNA-ligase_IIa"/>
</dbReference>
<dbReference type="InterPro" id="IPR018163">
    <property type="entry name" value="Thr/Ala-tRNA-synth_IIc_edit"/>
</dbReference>
<dbReference type="InterPro" id="IPR047246">
    <property type="entry name" value="ThrRS_anticodon"/>
</dbReference>
<dbReference type="InterPro" id="IPR033728">
    <property type="entry name" value="ThrRS_core"/>
</dbReference>
<dbReference type="InterPro" id="IPR012947">
    <property type="entry name" value="tRNA_SAD"/>
</dbReference>
<dbReference type="NCBIfam" id="TIGR00418">
    <property type="entry name" value="thrS"/>
    <property type="match status" value="1"/>
</dbReference>
<dbReference type="PANTHER" id="PTHR11451:SF44">
    <property type="entry name" value="THREONINE--TRNA LIGASE, CHLOROPLASTIC_MITOCHONDRIAL 2"/>
    <property type="match status" value="1"/>
</dbReference>
<dbReference type="PANTHER" id="PTHR11451">
    <property type="entry name" value="THREONINE-TRNA LIGASE"/>
    <property type="match status" value="1"/>
</dbReference>
<dbReference type="Pfam" id="PF03129">
    <property type="entry name" value="HGTP_anticodon"/>
    <property type="match status" value="1"/>
</dbReference>
<dbReference type="Pfam" id="PF02824">
    <property type="entry name" value="TGS"/>
    <property type="match status" value="1"/>
</dbReference>
<dbReference type="Pfam" id="PF00587">
    <property type="entry name" value="tRNA-synt_2b"/>
    <property type="match status" value="1"/>
</dbReference>
<dbReference type="Pfam" id="PF07973">
    <property type="entry name" value="tRNA_SAD"/>
    <property type="match status" value="1"/>
</dbReference>
<dbReference type="PRINTS" id="PR01047">
    <property type="entry name" value="TRNASYNTHTHR"/>
</dbReference>
<dbReference type="SMART" id="SM00863">
    <property type="entry name" value="tRNA_SAD"/>
    <property type="match status" value="1"/>
</dbReference>
<dbReference type="SUPFAM" id="SSF52954">
    <property type="entry name" value="Class II aaRS ABD-related"/>
    <property type="match status" value="1"/>
</dbReference>
<dbReference type="SUPFAM" id="SSF55681">
    <property type="entry name" value="Class II aaRS and biotin synthetases"/>
    <property type="match status" value="1"/>
</dbReference>
<dbReference type="SUPFAM" id="SSF81271">
    <property type="entry name" value="TGS-like"/>
    <property type="match status" value="1"/>
</dbReference>
<dbReference type="SUPFAM" id="SSF55186">
    <property type="entry name" value="ThrRS/AlaRS common domain"/>
    <property type="match status" value="1"/>
</dbReference>
<dbReference type="PROSITE" id="PS50862">
    <property type="entry name" value="AA_TRNA_LIGASE_II"/>
    <property type="match status" value="1"/>
</dbReference>
<dbReference type="PROSITE" id="PS51880">
    <property type="entry name" value="TGS"/>
    <property type="match status" value="1"/>
</dbReference>
<keyword id="KW-0030">Aminoacyl-tRNA synthetase</keyword>
<keyword id="KW-0067">ATP-binding</keyword>
<keyword id="KW-0963">Cytoplasm</keyword>
<keyword id="KW-0436">Ligase</keyword>
<keyword id="KW-0479">Metal-binding</keyword>
<keyword id="KW-0547">Nucleotide-binding</keyword>
<keyword id="KW-0648">Protein biosynthesis</keyword>
<keyword id="KW-0694">RNA-binding</keyword>
<keyword id="KW-0820">tRNA-binding</keyword>
<keyword id="KW-0862">Zinc</keyword>
<evidence type="ECO:0000255" key="1">
    <source>
        <dbReference type="HAMAP-Rule" id="MF_00184"/>
    </source>
</evidence>
<evidence type="ECO:0000255" key="2">
    <source>
        <dbReference type="PROSITE-ProRule" id="PRU01228"/>
    </source>
</evidence>
<sequence length="637" mass="72580">MLNITLPDGSVRQYESPVTVAQIAASIGAGLAKAAVAGKVNGKLVDACDPITEDSSVQIITPKDQEGIEIIRHSCAHLVGHAVKQLYPNAKMVIGPVIEEGFYYDIATEKPFTPEDVAAIEARMKELIAQDYDVVKIMTPRAEAIKIFQERGEEYKLRLIDDMPEVEAMGMYHHQEYVDMCRGPHVPNTRFLKNFKLTKLAGAYWRGDSNNEMLQRIYGTAWATKDELKAYIQRIEEAEKRDHRKLGKQLDLFHLQDEAPGMVFWHPKGWALWQVIEQHMRKELNAAGYKEVKTPQIMDKTFWEKSGHWDNYKDNMFVTSSEKREYAVKPMNCPGHVQIFNNGLRSYRDLPMRLAEFGSCHRNEPSGALHGLMRVRGFVQDDAHIFCTEDQIVSEARAFNELLVRIYKQFGFHDVSVKLSLRPEKRAGSDDVWDKAEQGLREALTACGVEWGELPGEGAFYGPKIEYHVRDALGRSWQCGTLQLDFVLPERLGAEYVTENNDRARPVMLHRAILGSLERFIGILIENHAGSFPLWLAPVQLVIMNITENQADYCREVAAKLQAAGFRAELDLRNEKIGYKIRDNSQYRFPYQIVVGDKEKQENKVAVRRKAEDLGSLDLDDFIAQLQQEITDALVNH</sequence>
<gene>
    <name evidence="1" type="primary">thrS</name>
    <name type="ordered locus">NMCC_0680</name>
</gene>
<reference key="1">
    <citation type="journal article" date="2008" name="Genomics">
        <title>Characterization of ST-4821 complex, a unique Neisseria meningitidis clone.</title>
        <authorList>
            <person name="Peng J."/>
            <person name="Yang L."/>
            <person name="Yang F."/>
            <person name="Yang J."/>
            <person name="Yan Y."/>
            <person name="Nie H."/>
            <person name="Zhang X."/>
            <person name="Xiong Z."/>
            <person name="Jiang Y."/>
            <person name="Cheng F."/>
            <person name="Xu X."/>
            <person name="Chen S."/>
            <person name="Sun L."/>
            <person name="Li W."/>
            <person name="Shen Y."/>
            <person name="Shao Z."/>
            <person name="Liang X."/>
            <person name="Xu J."/>
            <person name="Jin Q."/>
        </authorList>
    </citation>
    <scope>NUCLEOTIDE SEQUENCE [LARGE SCALE GENOMIC DNA]</scope>
    <source>
        <strain>053442</strain>
    </source>
</reference>
<feature type="chain" id="PRO_1000077365" description="Threonine--tRNA ligase">
    <location>
        <begin position="1"/>
        <end position="637"/>
    </location>
</feature>
<feature type="domain" description="TGS" evidence="2">
    <location>
        <begin position="1"/>
        <end position="61"/>
    </location>
</feature>
<feature type="region of interest" description="Catalytic" evidence="1">
    <location>
        <begin position="242"/>
        <end position="533"/>
    </location>
</feature>
<feature type="binding site" evidence="1">
    <location>
        <position position="333"/>
    </location>
    <ligand>
        <name>Zn(2+)</name>
        <dbReference type="ChEBI" id="CHEBI:29105"/>
    </ligand>
</feature>
<feature type="binding site" evidence="1">
    <location>
        <position position="384"/>
    </location>
    <ligand>
        <name>Zn(2+)</name>
        <dbReference type="ChEBI" id="CHEBI:29105"/>
    </ligand>
</feature>
<feature type="binding site" evidence="1">
    <location>
        <position position="510"/>
    </location>
    <ligand>
        <name>Zn(2+)</name>
        <dbReference type="ChEBI" id="CHEBI:29105"/>
    </ligand>
</feature>
<proteinExistence type="inferred from homology"/>
<comment type="function">
    <text evidence="1">Catalyzes the attachment of threonine to tRNA(Thr) in a two-step reaction: L-threonine is first activated by ATP to form Thr-AMP and then transferred to the acceptor end of tRNA(Thr). Also edits incorrectly charged L-seryl-tRNA(Thr).</text>
</comment>
<comment type="catalytic activity">
    <reaction evidence="1">
        <text>tRNA(Thr) + L-threonine + ATP = L-threonyl-tRNA(Thr) + AMP + diphosphate + H(+)</text>
        <dbReference type="Rhea" id="RHEA:24624"/>
        <dbReference type="Rhea" id="RHEA-COMP:9670"/>
        <dbReference type="Rhea" id="RHEA-COMP:9704"/>
        <dbReference type="ChEBI" id="CHEBI:15378"/>
        <dbReference type="ChEBI" id="CHEBI:30616"/>
        <dbReference type="ChEBI" id="CHEBI:33019"/>
        <dbReference type="ChEBI" id="CHEBI:57926"/>
        <dbReference type="ChEBI" id="CHEBI:78442"/>
        <dbReference type="ChEBI" id="CHEBI:78534"/>
        <dbReference type="ChEBI" id="CHEBI:456215"/>
        <dbReference type="EC" id="6.1.1.3"/>
    </reaction>
</comment>
<comment type="cofactor">
    <cofactor evidence="1">
        <name>Zn(2+)</name>
        <dbReference type="ChEBI" id="CHEBI:29105"/>
    </cofactor>
    <text evidence="1">Binds 1 zinc ion per subunit.</text>
</comment>
<comment type="subunit">
    <text evidence="1">Homodimer.</text>
</comment>
<comment type="subcellular location">
    <subcellularLocation>
        <location evidence="1">Cytoplasm</location>
    </subcellularLocation>
</comment>
<comment type="similarity">
    <text evidence="1">Belongs to the class-II aminoacyl-tRNA synthetase family.</text>
</comment>